<keyword id="KW-0001">2Fe-2S</keyword>
<keyword id="KW-0997">Cell inner membrane</keyword>
<keyword id="KW-1003">Cell membrane</keyword>
<keyword id="KW-0274">FAD</keyword>
<keyword id="KW-0285">Flavoprotein</keyword>
<keyword id="KW-0406">Ion transport</keyword>
<keyword id="KW-0408">Iron</keyword>
<keyword id="KW-0411">Iron-sulfur</keyword>
<keyword id="KW-0472">Membrane</keyword>
<keyword id="KW-0479">Metal-binding</keyword>
<keyword id="KW-0520">NAD</keyword>
<keyword id="KW-0915">Sodium</keyword>
<keyword id="KW-0739">Sodium transport</keyword>
<keyword id="KW-1278">Translocase</keyword>
<keyword id="KW-0812">Transmembrane</keyword>
<keyword id="KW-1133">Transmembrane helix</keyword>
<keyword id="KW-0813">Transport</keyword>
<keyword id="KW-0830">Ubiquinone</keyword>
<comment type="function">
    <text evidence="1">NQR complex catalyzes the reduction of ubiquinone-1 to ubiquinol by two successive reactions, coupled with the transport of Na(+) ions from the cytoplasm to the periplasm. The first step is catalyzed by NqrF, which accepts electrons from NADH and reduces ubiquinone-1 to ubisemiquinone by a one-electron transfer pathway.</text>
</comment>
<comment type="catalytic activity">
    <reaction evidence="1">
        <text>a ubiquinone + n Na(+)(in) + NADH + H(+) = a ubiquinol + n Na(+)(out) + NAD(+)</text>
        <dbReference type="Rhea" id="RHEA:47748"/>
        <dbReference type="Rhea" id="RHEA-COMP:9565"/>
        <dbReference type="Rhea" id="RHEA-COMP:9566"/>
        <dbReference type="ChEBI" id="CHEBI:15378"/>
        <dbReference type="ChEBI" id="CHEBI:16389"/>
        <dbReference type="ChEBI" id="CHEBI:17976"/>
        <dbReference type="ChEBI" id="CHEBI:29101"/>
        <dbReference type="ChEBI" id="CHEBI:57540"/>
        <dbReference type="ChEBI" id="CHEBI:57945"/>
        <dbReference type="EC" id="7.2.1.1"/>
    </reaction>
</comment>
<comment type="cofactor">
    <cofactor evidence="1">
        <name>[2Fe-2S] cluster</name>
        <dbReference type="ChEBI" id="CHEBI:190135"/>
    </cofactor>
    <text evidence="1">Binds 1 [2Fe-2S] cluster.</text>
</comment>
<comment type="cofactor">
    <cofactor evidence="1">
        <name>FAD</name>
        <dbReference type="ChEBI" id="CHEBI:57692"/>
    </cofactor>
</comment>
<comment type="subunit">
    <text evidence="1">Composed of six subunits; NqrA, NqrB, NqrC, NqrD, NqrE and NqrF.</text>
</comment>
<comment type="subcellular location">
    <subcellularLocation>
        <location evidence="1">Cell inner membrane</location>
        <topology evidence="1">Single-pass membrane protein</topology>
    </subcellularLocation>
</comment>
<comment type="similarity">
    <text evidence="1">Belongs to the NqrF family.</text>
</comment>
<proteinExistence type="inferred from homology"/>
<feature type="chain" id="PRO_1000080574" description="Na(+)-translocating NADH-quinone reductase subunit F">
    <location>
        <begin position="1"/>
        <end position="431"/>
    </location>
</feature>
<feature type="transmembrane region" description="Helical" evidence="1">
    <location>
        <begin position="10"/>
        <end position="30"/>
    </location>
</feature>
<feature type="domain" description="2Fe-2S ferredoxin-type" evidence="1">
    <location>
        <begin position="41"/>
        <end position="133"/>
    </location>
</feature>
<feature type="domain" description="FAD-binding FR-type" evidence="1">
    <location>
        <begin position="136"/>
        <end position="286"/>
    </location>
</feature>
<feature type="binding site" evidence="1">
    <location>
        <position position="76"/>
    </location>
    <ligand>
        <name>[2Fe-2S] cluster</name>
        <dbReference type="ChEBI" id="CHEBI:190135"/>
    </ligand>
</feature>
<feature type="binding site" evidence="1">
    <location>
        <position position="82"/>
    </location>
    <ligand>
        <name>[2Fe-2S] cluster</name>
        <dbReference type="ChEBI" id="CHEBI:190135"/>
    </ligand>
</feature>
<feature type="binding site" evidence="1">
    <location>
        <position position="85"/>
    </location>
    <ligand>
        <name>[2Fe-2S] cluster</name>
        <dbReference type="ChEBI" id="CHEBI:190135"/>
    </ligand>
</feature>
<feature type="binding site" evidence="1">
    <location>
        <position position="117"/>
    </location>
    <ligand>
        <name>[2Fe-2S] cluster</name>
        <dbReference type="ChEBI" id="CHEBI:190135"/>
    </ligand>
</feature>
<reference key="1">
    <citation type="journal article" date="2006" name="DNA Res.">
        <title>Genome sequence of the cat pathogen, Chlamydophila felis.</title>
        <authorList>
            <person name="Azuma Y."/>
            <person name="Hirakawa H."/>
            <person name="Yamashita A."/>
            <person name="Cai Y."/>
            <person name="Rahman M.A."/>
            <person name="Suzuki H."/>
            <person name="Mitaku S."/>
            <person name="Toh H."/>
            <person name="Goto S."/>
            <person name="Murakami T."/>
            <person name="Sugi K."/>
            <person name="Hayashi H."/>
            <person name="Fukushi H."/>
            <person name="Hattori M."/>
            <person name="Kuhara S."/>
            <person name="Shirai M."/>
        </authorList>
    </citation>
    <scope>NUCLEOTIDE SEQUENCE [LARGE SCALE GENOMIC DNA]</scope>
    <source>
        <strain>Fe/C-56</strain>
    </source>
</reference>
<dbReference type="EC" id="7.2.1.1" evidence="1"/>
<dbReference type="EMBL" id="AP006861">
    <property type="protein sequence ID" value="BAE80902.1"/>
    <property type="molecule type" value="Genomic_DNA"/>
</dbReference>
<dbReference type="RefSeq" id="WP_011457687.1">
    <property type="nucleotide sequence ID" value="NC_007899.1"/>
</dbReference>
<dbReference type="SMR" id="Q255Y6"/>
<dbReference type="STRING" id="264202.CF0130"/>
<dbReference type="KEGG" id="cfe:CF0130"/>
<dbReference type="eggNOG" id="COG2871">
    <property type="taxonomic scope" value="Bacteria"/>
</dbReference>
<dbReference type="HOGENOM" id="CLU_003827_7_2_0"/>
<dbReference type="OrthoDB" id="9796486at2"/>
<dbReference type="Proteomes" id="UP000001260">
    <property type="component" value="Chromosome"/>
</dbReference>
<dbReference type="GO" id="GO:0005886">
    <property type="term" value="C:plasma membrane"/>
    <property type="evidence" value="ECO:0007669"/>
    <property type="project" value="UniProtKB-SubCell"/>
</dbReference>
<dbReference type="GO" id="GO:0051537">
    <property type="term" value="F:2 iron, 2 sulfur cluster binding"/>
    <property type="evidence" value="ECO:0007669"/>
    <property type="project" value="UniProtKB-KW"/>
</dbReference>
<dbReference type="GO" id="GO:0009055">
    <property type="term" value="F:electron transfer activity"/>
    <property type="evidence" value="ECO:0007669"/>
    <property type="project" value="UniProtKB-UniRule"/>
</dbReference>
<dbReference type="GO" id="GO:0046872">
    <property type="term" value="F:metal ion binding"/>
    <property type="evidence" value="ECO:0007669"/>
    <property type="project" value="UniProtKB-KW"/>
</dbReference>
<dbReference type="GO" id="GO:0016655">
    <property type="term" value="F:oxidoreductase activity, acting on NAD(P)H, quinone or similar compound as acceptor"/>
    <property type="evidence" value="ECO:0007669"/>
    <property type="project" value="InterPro"/>
</dbReference>
<dbReference type="GO" id="GO:0006814">
    <property type="term" value="P:sodium ion transport"/>
    <property type="evidence" value="ECO:0007669"/>
    <property type="project" value="UniProtKB-UniRule"/>
</dbReference>
<dbReference type="CDD" id="cd00207">
    <property type="entry name" value="fer2"/>
    <property type="match status" value="1"/>
</dbReference>
<dbReference type="CDD" id="cd06188">
    <property type="entry name" value="NADH_quinone_reductase"/>
    <property type="match status" value="1"/>
</dbReference>
<dbReference type="Gene3D" id="3.10.20.30">
    <property type="match status" value="1"/>
</dbReference>
<dbReference type="Gene3D" id="3.40.50.80">
    <property type="entry name" value="Nucleotide-binding domain of ferredoxin-NADP reductase (FNR) module"/>
    <property type="match status" value="1"/>
</dbReference>
<dbReference type="Gene3D" id="2.40.30.10">
    <property type="entry name" value="Translation factors"/>
    <property type="match status" value="1"/>
</dbReference>
<dbReference type="HAMAP" id="MF_00430">
    <property type="entry name" value="NqrF"/>
    <property type="match status" value="1"/>
</dbReference>
<dbReference type="InterPro" id="IPR036010">
    <property type="entry name" value="2Fe-2S_ferredoxin-like_sf"/>
</dbReference>
<dbReference type="InterPro" id="IPR001041">
    <property type="entry name" value="2Fe-2S_ferredoxin-type"/>
</dbReference>
<dbReference type="InterPro" id="IPR012675">
    <property type="entry name" value="Beta-grasp_dom_sf"/>
</dbReference>
<dbReference type="InterPro" id="IPR017927">
    <property type="entry name" value="FAD-bd_FR_type"/>
</dbReference>
<dbReference type="InterPro" id="IPR039261">
    <property type="entry name" value="FNR_nucleotide-bd"/>
</dbReference>
<dbReference type="InterPro" id="IPR010205">
    <property type="entry name" value="NqrF"/>
</dbReference>
<dbReference type="InterPro" id="IPR001433">
    <property type="entry name" value="OxRdtase_FAD/NAD-bd"/>
</dbReference>
<dbReference type="InterPro" id="IPR017938">
    <property type="entry name" value="Riboflavin_synthase-like_b-brl"/>
</dbReference>
<dbReference type="NCBIfam" id="TIGR01941">
    <property type="entry name" value="nqrF"/>
    <property type="match status" value="1"/>
</dbReference>
<dbReference type="PANTHER" id="PTHR43644">
    <property type="entry name" value="NA(+)-TRANSLOCATING NADH-QUINONE REDUCTASE SUBUNIT"/>
    <property type="match status" value="1"/>
</dbReference>
<dbReference type="PANTHER" id="PTHR43644:SF1">
    <property type="entry name" value="NAD(P)H-FLAVIN REDUCTASE"/>
    <property type="match status" value="1"/>
</dbReference>
<dbReference type="Pfam" id="PF00111">
    <property type="entry name" value="Fer2"/>
    <property type="match status" value="1"/>
</dbReference>
<dbReference type="Pfam" id="PF00175">
    <property type="entry name" value="NAD_binding_1"/>
    <property type="match status" value="1"/>
</dbReference>
<dbReference type="PIRSF" id="PIRSF000044">
    <property type="entry name" value="Cis_Diol_DH_RD"/>
    <property type="match status" value="1"/>
</dbReference>
<dbReference type="SUPFAM" id="SSF54292">
    <property type="entry name" value="2Fe-2S ferredoxin-like"/>
    <property type="match status" value="1"/>
</dbReference>
<dbReference type="SUPFAM" id="SSF52343">
    <property type="entry name" value="Ferredoxin reductase-like, C-terminal NADP-linked domain"/>
    <property type="match status" value="1"/>
</dbReference>
<dbReference type="SUPFAM" id="SSF63380">
    <property type="entry name" value="Riboflavin synthase domain-like"/>
    <property type="match status" value="1"/>
</dbReference>
<dbReference type="PROSITE" id="PS51085">
    <property type="entry name" value="2FE2S_FER_2"/>
    <property type="match status" value="1"/>
</dbReference>
<dbReference type="PROSITE" id="PS51384">
    <property type="entry name" value="FAD_FR"/>
    <property type="match status" value="1"/>
</dbReference>
<sequence length="431" mass="48282">MTWLSGLYFISIASLVFCVIGLILSGVILISRKLLVKIHPCKLKINNDDSLTKTVDSGHSLLSSLLDSGIPIPSPCGGKATCKQCKVKIVKGADQPLETDRATFSKRQLEQGWRLSCQTKVQHDMNLEIEERYLNASSWEGTVVSNDNVATFIKELVVSVSPEHPIPFKPGGYLQISVPAYKTNTSDWKQTMAPEYHSDWERFNLFNQIIDNSLLESGSANKAYSLASYPAELPVIKFNIRIATPPFINNAPSPNIPWGVCSSYIFSLKPGDKITVSGPYGESFMKENNRPLIFLIGGAGSSFGRSHILDLLLDKHSTRDITLWYGARSLKENIYQEEYEKLEKDFPNFHYHLVLSEPLAEDIASGWDKNDPEKTNFLFRAFELGQLSKLSNPEDYLYYVCGPPLHNSSILKLLDNYGVERSSIILDDFGN</sequence>
<name>NQRF_CHLFF</name>
<protein>
    <recommendedName>
        <fullName evidence="1">Na(+)-translocating NADH-quinone reductase subunit F</fullName>
        <shortName evidence="1">Na(+)-NQR subunit F</shortName>
        <shortName evidence="1">Na(+)-translocating NQR subunit F</shortName>
        <ecNumber evidence="1">7.2.1.1</ecNumber>
    </recommendedName>
    <alternativeName>
        <fullName evidence="1">NQR complex subunit F</fullName>
    </alternativeName>
    <alternativeName>
        <fullName evidence="1">NQR-1 subunit F</fullName>
    </alternativeName>
</protein>
<gene>
    <name evidence="1" type="primary">nqrF</name>
    <name type="ordered locus">CF0130</name>
</gene>
<organism>
    <name type="scientific">Chlamydia felis (strain Fe/C-56)</name>
    <name type="common">Chlamydophila felis</name>
    <dbReference type="NCBI Taxonomy" id="264202"/>
    <lineage>
        <taxon>Bacteria</taxon>
        <taxon>Pseudomonadati</taxon>
        <taxon>Chlamydiota</taxon>
        <taxon>Chlamydiia</taxon>
        <taxon>Chlamydiales</taxon>
        <taxon>Chlamydiaceae</taxon>
        <taxon>Chlamydia/Chlamydophila group</taxon>
        <taxon>Chlamydia</taxon>
    </lineage>
</organism>
<accession>Q255Y6</accession>
<evidence type="ECO:0000255" key="1">
    <source>
        <dbReference type="HAMAP-Rule" id="MF_00430"/>
    </source>
</evidence>